<dbReference type="EC" id="3.2.2.27" evidence="1"/>
<dbReference type="EMBL" id="BA000037">
    <property type="protein sequence ID" value="BAC93419.1"/>
    <property type="status" value="ALT_INIT"/>
    <property type="molecule type" value="Genomic_DNA"/>
</dbReference>
<dbReference type="RefSeq" id="WP_011078627.1">
    <property type="nucleotide sequence ID" value="NC_005139.1"/>
</dbReference>
<dbReference type="SMR" id="Q7MNR0"/>
<dbReference type="STRING" id="672.VV93_v1c05950"/>
<dbReference type="KEGG" id="vvy:VV0655"/>
<dbReference type="eggNOG" id="COG0692">
    <property type="taxonomic scope" value="Bacteria"/>
</dbReference>
<dbReference type="HOGENOM" id="CLU_032162_3_0_6"/>
<dbReference type="Proteomes" id="UP000002675">
    <property type="component" value="Chromosome I"/>
</dbReference>
<dbReference type="GO" id="GO:0005737">
    <property type="term" value="C:cytoplasm"/>
    <property type="evidence" value="ECO:0007669"/>
    <property type="project" value="UniProtKB-SubCell"/>
</dbReference>
<dbReference type="GO" id="GO:0004844">
    <property type="term" value="F:uracil DNA N-glycosylase activity"/>
    <property type="evidence" value="ECO:0007669"/>
    <property type="project" value="UniProtKB-UniRule"/>
</dbReference>
<dbReference type="GO" id="GO:0097510">
    <property type="term" value="P:base-excision repair, AP site formation via deaminated base removal"/>
    <property type="evidence" value="ECO:0007669"/>
    <property type="project" value="TreeGrafter"/>
</dbReference>
<dbReference type="CDD" id="cd10027">
    <property type="entry name" value="UDG-F1-like"/>
    <property type="match status" value="1"/>
</dbReference>
<dbReference type="FunFam" id="3.40.470.10:FF:000001">
    <property type="entry name" value="Uracil-DNA glycosylase"/>
    <property type="match status" value="1"/>
</dbReference>
<dbReference type="Gene3D" id="3.40.470.10">
    <property type="entry name" value="Uracil-DNA glycosylase-like domain"/>
    <property type="match status" value="1"/>
</dbReference>
<dbReference type="HAMAP" id="MF_00148">
    <property type="entry name" value="UDG"/>
    <property type="match status" value="1"/>
</dbReference>
<dbReference type="InterPro" id="IPR002043">
    <property type="entry name" value="UDG_fam1"/>
</dbReference>
<dbReference type="InterPro" id="IPR018085">
    <property type="entry name" value="Ura-DNA_Glyclase_AS"/>
</dbReference>
<dbReference type="InterPro" id="IPR005122">
    <property type="entry name" value="Uracil-DNA_glycosylase-like"/>
</dbReference>
<dbReference type="InterPro" id="IPR036895">
    <property type="entry name" value="Uracil-DNA_glycosylase-like_sf"/>
</dbReference>
<dbReference type="NCBIfam" id="NF003588">
    <property type="entry name" value="PRK05254.1-1"/>
    <property type="match status" value="1"/>
</dbReference>
<dbReference type="NCBIfam" id="NF003589">
    <property type="entry name" value="PRK05254.1-2"/>
    <property type="match status" value="1"/>
</dbReference>
<dbReference type="NCBIfam" id="NF003591">
    <property type="entry name" value="PRK05254.1-4"/>
    <property type="match status" value="1"/>
</dbReference>
<dbReference type="NCBIfam" id="NF003592">
    <property type="entry name" value="PRK05254.1-5"/>
    <property type="match status" value="1"/>
</dbReference>
<dbReference type="NCBIfam" id="TIGR00628">
    <property type="entry name" value="ung"/>
    <property type="match status" value="1"/>
</dbReference>
<dbReference type="PANTHER" id="PTHR11264">
    <property type="entry name" value="URACIL-DNA GLYCOSYLASE"/>
    <property type="match status" value="1"/>
</dbReference>
<dbReference type="PANTHER" id="PTHR11264:SF0">
    <property type="entry name" value="URACIL-DNA GLYCOSYLASE"/>
    <property type="match status" value="1"/>
</dbReference>
<dbReference type="Pfam" id="PF03167">
    <property type="entry name" value="UDG"/>
    <property type="match status" value="1"/>
</dbReference>
<dbReference type="SMART" id="SM00986">
    <property type="entry name" value="UDG"/>
    <property type="match status" value="1"/>
</dbReference>
<dbReference type="SMART" id="SM00987">
    <property type="entry name" value="UreE_C"/>
    <property type="match status" value="1"/>
</dbReference>
<dbReference type="SUPFAM" id="SSF52141">
    <property type="entry name" value="Uracil-DNA glycosylase-like"/>
    <property type="match status" value="1"/>
</dbReference>
<dbReference type="PROSITE" id="PS00130">
    <property type="entry name" value="U_DNA_GLYCOSYLASE"/>
    <property type="match status" value="1"/>
</dbReference>
<proteinExistence type="inferred from homology"/>
<gene>
    <name evidence="1" type="primary">ung</name>
    <name type="ordered locus">VV0655</name>
</gene>
<keyword id="KW-0963">Cytoplasm</keyword>
<keyword id="KW-0227">DNA damage</keyword>
<keyword id="KW-0234">DNA repair</keyword>
<keyword id="KW-0378">Hydrolase</keyword>
<sequence>MTQQLTWHDVIGAEKEQSYFQQTLNFVEAERQAGKVIYPPAKDVFNAFRYTEFQDVKVVILGQDPYHGPNQAHGLCFSVLPGIKTPPSLVNMYKELAQDIQGFQIPAHGYLEAWAKQGVLLLNTVLTVEQGKAHSHASLGWETFTDKVIEAINQHQQGVVFLLWGSHAQKKGRFIDRHKHVVLTAPHPSPLSAHRGFLGCKHFSQANQHLLDQGKQAIDWQLPLSL</sequence>
<organism>
    <name type="scientific">Vibrio vulnificus (strain YJ016)</name>
    <dbReference type="NCBI Taxonomy" id="196600"/>
    <lineage>
        <taxon>Bacteria</taxon>
        <taxon>Pseudomonadati</taxon>
        <taxon>Pseudomonadota</taxon>
        <taxon>Gammaproteobacteria</taxon>
        <taxon>Vibrionales</taxon>
        <taxon>Vibrionaceae</taxon>
        <taxon>Vibrio</taxon>
    </lineage>
</organism>
<evidence type="ECO:0000255" key="1">
    <source>
        <dbReference type="HAMAP-Rule" id="MF_00148"/>
    </source>
</evidence>
<evidence type="ECO:0000305" key="2"/>
<name>UNG_VIBVY</name>
<feature type="chain" id="PRO_0000176164" description="Uracil-DNA glycosylase">
    <location>
        <begin position="1"/>
        <end position="226"/>
    </location>
</feature>
<feature type="active site" description="Proton acceptor" evidence="1">
    <location>
        <position position="64"/>
    </location>
</feature>
<reference key="1">
    <citation type="journal article" date="2003" name="Genome Res.">
        <title>Comparative genome analysis of Vibrio vulnificus, a marine pathogen.</title>
        <authorList>
            <person name="Chen C.-Y."/>
            <person name="Wu K.-M."/>
            <person name="Chang Y.-C."/>
            <person name="Chang C.-H."/>
            <person name="Tsai H.-C."/>
            <person name="Liao T.-L."/>
            <person name="Liu Y.-M."/>
            <person name="Chen H.-J."/>
            <person name="Shen A.B.-T."/>
            <person name="Li J.-C."/>
            <person name="Su T.-L."/>
            <person name="Shao C.-P."/>
            <person name="Lee C.-T."/>
            <person name="Hor L.-I."/>
            <person name="Tsai S.-F."/>
        </authorList>
    </citation>
    <scope>NUCLEOTIDE SEQUENCE [LARGE SCALE GENOMIC DNA]</scope>
    <source>
        <strain>YJ016</strain>
    </source>
</reference>
<accession>Q7MNR0</accession>
<protein>
    <recommendedName>
        <fullName evidence="1">Uracil-DNA glycosylase</fullName>
        <shortName evidence="1">UDG</shortName>
        <ecNumber evidence="1">3.2.2.27</ecNumber>
    </recommendedName>
</protein>
<comment type="function">
    <text evidence="1">Excises uracil residues from the DNA which can arise as a result of misincorporation of dUMP residues by DNA polymerase or due to deamination of cytosine.</text>
</comment>
<comment type="catalytic activity">
    <reaction evidence="1">
        <text>Hydrolyzes single-stranded DNA or mismatched double-stranded DNA and polynucleotides, releasing free uracil.</text>
        <dbReference type="EC" id="3.2.2.27"/>
    </reaction>
</comment>
<comment type="subcellular location">
    <subcellularLocation>
        <location evidence="1">Cytoplasm</location>
    </subcellularLocation>
</comment>
<comment type="similarity">
    <text evidence="1">Belongs to the uracil-DNA glycosylase (UDG) superfamily. UNG family.</text>
</comment>
<comment type="sequence caution" evidence="2">
    <conflict type="erroneous initiation">
        <sequence resource="EMBL-CDS" id="BAC93419"/>
    </conflict>
</comment>